<dbReference type="EMBL" id="U14192">
    <property type="protein sequence ID" value="AAA62632.1"/>
    <property type="molecule type" value="mRNA"/>
</dbReference>
<dbReference type="EMBL" id="U15589">
    <property type="protein sequence ID" value="AAC52151.1"/>
    <property type="molecule type" value="mRNA"/>
</dbReference>
<dbReference type="PIR" id="A55913">
    <property type="entry name" value="A55913"/>
</dbReference>
<dbReference type="RefSeq" id="NP_062252.2">
    <property type="nucleotide sequence ID" value="NM_019379.2"/>
</dbReference>
<dbReference type="SMR" id="P41542"/>
<dbReference type="BioGRID" id="248556">
    <property type="interactions" value="3"/>
</dbReference>
<dbReference type="CORUM" id="P41542"/>
<dbReference type="FunCoup" id="P41542">
    <property type="interactions" value="3479"/>
</dbReference>
<dbReference type="IntAct" id="P41542">
    <property type="interactions" value="16"/>
</dbReference>
<dbReference type="STRING" id="10116.ENSRNOP00000003277"/>
<dbReference type="iPTMnet" id="P41542"/>
<dbReference type="PhosphoSitePlus" id="P41542"/>
<dbReference type="jPOST" id="P41542"/>
<dbReference type="PaxDb" id="10116-ENSRNOP00000003277"/>
<dbReference type="GeneID" id="56042"/>
<dbReference type="KEGG" id="rno:56042"/>
<dbReference type="UCSC" id="RGD:621604">
    <property type="organism name" value="rat"/>
</dbReference>
<dbReference type="AGR" id="RGD:621604"/>
<dbReference type="CTD" id="8615"/>
<dbReference type="RGD" id="621604">
    <property type="gene designation" value="Uso1"/>
</dbReference>
<dbReference type="VEuPathDB" id="HostDB:ENSRNOG00000002301"/>
<dbReference type="eggNOG" id="KOG0946">
    <property type="taxonomic scope" value="Eukaryota"/>
</dbReference>
<dbReference type="HOGENOM" id="CLU_006318_2_0_1"/>
<dbReference type="InParanoid" id="P41542"/>
<dbReference type="PhylomeDB" id="P41542"/>
<dbReference type="TreeFam" id="TF106157"/>
<dbReference type="Reactome" id="R-RNO-204005">
    <property type="pathway name" value="COPII-mediated vesicle transport"/>
</dbReference>
<dbReference type="Reactome" id="R-RNO-6807878">
    <property type="pathway name" value="COPI-mediated anterograde transport"/>
</dbReference>
<dbReference type="PRO" id="PR:P41542"/>
<dbReference type="Proteomes" id="UP000002494">
    <property type="component" value="Chromosome 14"/>
</dbReference>
<dbReference type="Bgee" id="ENSRNOG00000002301">
    <property type="expression patterns" value="Expressed in jejunum and 20 other cell types or tissues"/>
</dbReference>
<dbReference type="GO" id="GO:0005829">
    <property type="term" value="C:cytosol"/>
    <property type="evidence" value="ECO:0000266"/>
    <property type="project" value="RGD"/>
</dbReference>
<dbReference type="GO" id="GO:0005783">
    <property type="term" value="C:endoplasmic reticulum"/>
    <property type="evidence" value="ECO:0000318"/>
    <property type="project" value="GO_Central"/>
</dbReference>
<dbReference type="GO" id="GO:0012507">
    <property type="term" value="C:ER to Golgi transport vesicle membrane"/>
    <property type="evidence" value="ECO:0000318"/>
    <property type="project" value="GO_Central"/>
</dbReference>
<dbReference type="GO" id="GO:0000139">
    <property type="term" value="C:Golgi membrane"/>
    <property type="evidence" value="ECO:0000304"/>
    <property type="project" value="Reactome"/>
</dbReference>
<dbReference type="GO" id="GO:0005795">
    <property type="term" value="C:Golgi stack"/>
    <property type="evidence" value="ECO:0000318"/>
    <property type="project" value="GO_Central"/>
</dbReference>
<dbReference type="GO" id="GO:0048471">
    <property type="term" value="C:perinuclear region of cytoplasm"/>
    <property type="evidence" value="ECO:0000266"/>
    <property type="project" value="RGD"/>
</dbReference>
<dbReference type="GO" id="GO:0006888">
    <property type="term" value="P:endoplasmic reticulum to Golgi vesicle-mediated transport"/>
    <property type="evidence" value="ECO:0000315"/>
    <property type="project" value="UniProtKB"/>
</dbReference>
<dbReference type="GO" id="GO:0007030">
    <property type="term" value="P:Golgi organization"/>
    <property type="evidence" value="ECO:0000266"/>
    <property type="project" value="RGD"/>
</dbReference>
<dbReference type="GO" id="GO:0048211">
    <property type="term" value="P:Golgi vesicle docking"/>
    <property type="evidence" value="ECO:0000318"/>
    <property type="project" value="GO_Central"/>
</dbReference>
<dbReference type="GO" id="GO:0006891">
    <property type="term" value="P:intra-Golgi vesicle-mediated transport"/>
    <property type="evidence" value="ECO:0000304"/>
    <property type="project" value="RGD"/>
</dbReference>
<dbReference type="GO" id="GO:0006886">
    <property type="term" value="P:intracellular protein transport"/>
    <property type="evidence" value="ECO:0000318"/>
    <property type="project" value="GO_Central"/>
</dbReference>
<dbReference type="GO" id="GO:0061025">
    <property type="term" value="P:membrane fusion"/>
    <property type="evidence" value="ECO:0000314"/>
    <property type="project" value="RGD"/>
</dbReference>
<dbReference type="GO" id="GO:1900076">
    <property type="term" value="P:regulation of cellular response to insulin stimulus"/>
    <property type="evidence" value="ECO:0000266"/>
    <property type="project" value="RGD"/>
</dbReference>
<dbReference type="GO" id="GO:0032252">
    <property type="term" value="P:secretory granule localization"/>
    <property type="evidence" value="ECO:0000266"/>
    <property type="project" value="RGD"/>
</dbReference>
<dbReference type="GO" id="GO:0007264">
    <property type="term" value="P:small GTPase-mediated signal transduction"/>
    <property type="evidence" value="ECO:0000266"/>
    <property type="project" value="RGD"/>
</dbReference>
<dbReference type="GO" id="GO:0045056">
    <property type="term" value="P:transcytosis"/>
    <property type="evidence" value="ECO:0000314"/>
    <property type="project" value="RGD"/>
</dbReference>
<dbReference type="GO" id="GO:0048280">
    <property type="term" value="P:vesicle fusion with Golgi apparatus"/>
    <property type="evidence" value="ECO:0007669"/>
    <property type="project" value="InterPro"/>
</dbReference>
<dbReference type="FunFam" id="1.25.10.10:FF:000054">
    <property type="entry name" value="General vesicular transport factor p115"/>
    <property type="match status" value="1"/>
</dbReference>
<dbReference type="Gene3D" id="1.25.10.10">
    <property type="entry name" value="Leucine-rich Repeat Variant"/>
    <property type="match status" value="1"/>
</dbReference>
<dbReference type="InterPro" id="IPR011989">
    <property type="entry name" value="ARM-like"/>
</dbReference>
<dbReference type="InterPro" id="IPR016024">
    <property type="entry name" value="ARM-type_fold"/>
</dbReference>
<dbReference type="InterPro" id="IPR000225">
    <property type="entry name" value="Armadillo"/>
</dbReference>
<dbReference type="InterPro" id="IPR041209">
    <property type="entry name" value="P115_Arm_rpt"/>
</dbReference>
<dbReference type="InterPro" id="IPR006955">
    <property type="entry name" value="Uso1_p115_C"/>
</dbReference>
<dbReference type="InterPro" id="IPR024095">
    <property type="entry name" value="Vesicle_P115"/>
</dbReference>
<dbReference type="InterPro" id="IPR006953">
    <property type="entry name" value="Vesicle_Uso1_P115_head"/>
</dbReference>
<dbReference type="PANTHER" id="PTHR10013">
    <property type="entry name" value="GENERAL VESICULAR TRANSPORT FACTOR P115"/>
    <property type="match status" value="1"/>
</dbReference>
<dbReference type="PANTHER" id="PTHR10013:SF0">
    <property type="entry name" value="GENERAL VESICULAR TRANSPORT FACTOR P115"/>
    <property type="match status" value="1"/>
</dbReference>
<dbReference type="Pfam" id="PF18770">
    <property type="entry name" value="Arm_vescicular"/>
    <property type="match status" value="1"/>
</dbReference>
<dbReference type="Pfam" id="PF04871">
    <property type="entry name" value="Uso1_p115_C"/>
    <property type="match status" value="1"/>
</dbReference>
<dbReference type="Pfam" id="PF04869">
    <property type="entry name" value="Uso1_p115_head"/>
    <property type="match status" value="1"/>
</dbReference>
<dbReference type="SMART" id="SM00185">
    <property type="entry name" value="ARM"/>
    <property type="match status" value="3"/>
</dbReference>
<dbReference type="SUPFAM" id="SSF48371">
    <property type="entry name" value="ARM repeat"/>
    <property type="match status" value="1"/>
</dbReference>
<dbReference type="PROSITE" id="PS50176">
    <property type="entry name" value="ARM_REPEAT"/>
    <property type="match status" value="1"/>
</dbReference>
<sequence length="959" mass="107162">MNFLRGVMGGQSAGPQHTEAETIQKLCDRVASSTLLDDRRNAVRALKSLSKKYRLEVGIQAMEHLIHVLQTDRSDSEIIAYALDTLYNIISNDEEEEVEENSTRQSEDLGSQFTEIFIKQPENVTLLLSLLEEFDFHVRWPGVRLLTSLLKQLGPPVQQIILVSPMGVSKLMDLLADSREIIRNDGVLLLQALTRSNGAIQKIVAFENAFERLLDIITEEGNSDGGIVVEDCLILLQNLLKNNNSNQNFFKEGSYIQRMKAWFEVGDENPGWSAQKVTNLHLMLQLVRVLVSPTNPPGATSSCQKAMFQCGLLQQLCTILMATGIPADILTETINTVSEVIRGCQVNQDYFASVNAPSNPPRPAIVVLLMSMVNERQPFVLRCAVLYCFQCFLYKNEKGQGEIVATLLPSTIDATGNSVSAGQLLCGGLFSTDSLSNWCAAVALAHALQGNATQKEQLLRVQLATSIGNPPVSLLQQCTNILSQGSKIQTRVGLLMLLCTWLSNCPIAVTHFLHNSANVPFLTGQIAENLGEEEQLVQGLCALLLGISIYFNDNSLENYTKEKLKQLIEKRIGKENYIEKLGFISKHELYSRASQKPQPNFPSPEYMIFDHEFTKLVKELEGVITKAIYKSSEEDKKEEEVKKTLEQHDNIVTHYKNMIREQDLQLEELKQQVSTLKCQNEQLQTAVTQQASQIQQHKDQYNLLKVQLGKDNHHQGSHSDGAQVNGIQPEEISRLREEIEELRSHQVLLQSQLAEKDTVIENLRSSQVSGMSEQALATCSPRDAEQVAELKQELSALKSQLCSQSLEITRLQTENSELQQRAETLAKSVPVEGESELVTAAKTTDVEGRLSALLQETKELKNEIKALSEERTAIQKQLDSSNSTIAILQTEKDKLYLEVTDSKKEQDDLLVLLADQDQKILSLKSKLKDLGHPVEEEDESGDQEDDDDELDDGDRDQDI</sequence>
<name>USO1_RAT</name>
<organism>
    <name type="scientific">Rattus norvegicus</name>
    <name type="common">Rat</name>
    <dbReference type="NCBI Taxonomy" id="10116"/>
    <lineage>
        <taxon>Eukaryota</taxon>
        <taxon>Metazoa</taxon>
        <taxon>Chordata</taxon>
        <taxon>Craniata</taxon>
        <taxon>Vertebrata</taxon>
        <taxon>Euteleostomi</taxon>
        <taxon>Mammalia</taxon>
        <taxon>Eutheria</taxon>
        <taxon>Euarchontoglires</taxon>
        <taxon>Glires</taxon>
        <taxon>Rodentia</taxon>
        <taxon>Myomorpha</taxon>
        <taxon>Muroidea</taxon>
        <taxon>Muridae</taxon>
        <taxon>Murinae</taxon>
        <taxon>Rattus</taxon>
    </lineage>
</organism>
<feature type="chain" id="PRO_0000065776" description="General vesicular transport factor p115">
    <location>
        <begin position="1"/>
        <end position="959"/>
    </location>
</feature>
<feature type="repeat" description="ARM 1">
    <location>
        <begin position="20"/>
        <end position="60"/>
    </location>
</feature>
<feature type="repeat" description="ARM 2">
    <location>
        <begin position="61"/>
        <end position="121"/>
    </location>
</feature>
<feature type="repeat" description="ARM 3">
    <location>
        <begin position="123"/>
        <end position="163"/>
    </location>
</feature>
<feature type="repeat" description="ARM 4">
    <location>
        <begin position="166"/>
        <end position="207"/>
    </location>
</feature>
<feature type="repeat" description="ARM 5">
    <location>
        <begin position="208"/>
        <end position="253"/>
    </location>
</feature>
<feature type="repeat" description="ARM 6">
    <location>
        <begin position="255"/>
        <end position="310"/>
    </location>
</feature>
<feature type="repeat" description="ARM 7">
    <location>
        <begin position="311"/>
        <end position="354"/>
    </location>
</feature>
<feature type="repeat" description="ARM 8">
    <location>
        <begin position="363"/>
        <end position="408"/>
    </location>
</feature>
<feature type="repeat" description="ARM 9">
    <location>
        <begin position="420"/>
        <end position="459"/>
    </location>
</feature>
<feature type="repeat" description="ARM 10">
    <location>
        <begin position="473"/>
        <end position="513"/>
    </location>
</feature>
<feature type="repeat" description="ARM 11">
    <location>
        <begin position="518"/>
        <end position="571"/>
    </location>
</feature>
<feature type="repeat" description="ARM 12">
    <location>
        <begin position="573"/>
        <end position="630"/>
    </location>
</feature>
<feature type="region of interest" description="Globular head">
    <location>
        <begin position="1"/>
        <end position="637"/>
    </location>
</feature>
<feature type="region of interest" description="Disordered" evidence="4">
    <location>
        <begin position="925"/>
        <end position="959"/>
    </location>
</feature>
<feature type="coiled-coil region" evidence="3">
    <location>
        <begin position="638"/>
        <end position="930"/>
    </location>
</feature>
<feature type="compositionally biased region" description="Acidic residues" evidence="4">
    <location>
        <begin position="935"/>
        <end position="959"/>
    </location>
</feature>
<feature type="modified residue" description="Phosphoserine" evidence="2">
    <location>
        <position position="50"/>
    </location>
</feature>
<feature type="modified residue" description="N6-acetyllysine" evidence="2">
    <location>
        <position position="202"/>
    </location>
</feature>
<feature type="modified residue" description="Phosphoserine" evidence="15 16">
    <location>
        <position position="940"/>
    </location>
</feature>
<feature type="sequence conflict" description="In Ref. 2; AAC52151." evidence="14" ref="2">
    <original>S</original>
    <variation>P</variation>
    <location>
        <position position="591"/>
    </location>
</feature>
<feature type="sequence conflict" description="In Ref. 2; AAC52151." evidence="14" ref="2">
    <original>M</original>
    <variation>V</variation>
    <location>
        <position position="658"/>
    </location>
</feature>
<feature type="sequence conflict" description="In Ref. 2; AAC52151." evidence="14" ref="2">
    <original>S</original>
    <variation>R</variation>
    <location>
        <position position="816"/>
    </location>
</feature>
<feature type="sequence conflict" description="In Ref. 2; AAC52151." evidence="14" ref="2">
    <original>A</original>
    <variation>S</variation>
    <location>
        <position position="873"/>
    </location>
</feature>
<comment type="function">
    <text evidence="5 8 9">General vesicular transport factor required for intercisternal transport in the Golgi stack; it is required for transcytotic fusion and/or subsequent binding of the vesicles to the target membrane (PubMed:10679020, PubMed:7831323, PubMed:7831324). May well act as a vesicular anchor by interacting with the target membrane and holding the vesicular and target membranes in proximity (PubMed:10679020, PubMed:7831323, PubMed:7831324).</text>
</comment>
<comment type="subunit">
    <text evidence="2 6 7 8 10 11">Homodimer. Dimerizes by parallel association of the tails, resulting in an elongated structure with two globular head domains side by side, and a long rod-like tail structure (PubMed:7831323). Interacts with MIF (By similarity). Interacts with GM130/GOLGA2; interaction is disrupted upon phosphorylation of GM130/GOLGA2 by CDK1 at the onset of mitosis (PubMed:10744704, PubMed:10769027, PubMed:9150144, PubMed:9753325).</text>
</comment>
<comment type="interaction">
    <interactant intactId="EBI-4423297">
        <id>P41542</id>
    </interactant>
    <interactant intactId="EBI-7837133">
        <id>Q62931</id>
        <label>Gosr1</label>
    </interactant>
    <organismsDiffer>false</organismsDiffer>
    <experiments>10</experiments>
</comment>
<comment type="interaction">
    <interactant intactId="EBI-4423297">
        <id>P41542</id>
    </interactant>
    <interactant intactId="EBI-2028244">
        <id>Q08851</id>
        <label>Stx5</label>
    </interactant>
    <organismsDiffer>false</organismsDiffer>
    <experiments>8</experiments>
</comment>
<comment type="interaction">
    <interactant intactId="EBI-4423297">
        <id>P41542</id>
    </interactant>
    <interactant intactId="EBI-761491">
        <id>Q6DFZ1</id>
        <label>Gbf1</label>
    </interactant>
    <organismsDiffer>true</organismsDiffer>
    <experiments>3</experiments>
</comment>
<comment type="subcellular location">
    <subcellularLocation>
        <location evidence="2">Cytoplasm</location>
        <location evidence="2">Cytosol</location>
    </subcellularLocation>
    <subcellularLocation>
        <location evidence="8">Golgi apparatus membrane</location>
        <topology evidence="2">Peripheral membrane protein</topology>
    </subcellularLocation>
    <text evidence="2">Recycles between the cytosol and the Golgi apparatus during interphase.</text>
</comment>
<comment type="domain">
    <text evidence="8">Composed of a globular head, an elongated tail (coiled-coil) and a highly acidic C-terminal domain.</text>
</comment>
<comment type="PTM">
    <text evidence="1">Phosphorylated in a cell cycle-specific manner; phosphorylated in interphase but not in mitotic cells. Dephosphorylated protein associates with the Golgi membrane; phosphorylation promostes dissociation (By similarity).</text>
</comment>
<comment type="similarity">
    <text evidence="14">Belongs to the VDP/USO1/EDE1 family.</text>
</comment>
<accession>P41542</accession>
<proteinExistence type="evidence at protein level"/>
<gene>
    <name type="primary">Uso1</name>
    <name type="synonym">Vdp</name>
</gene>
<reference key="1">
    <citation type="journal article" date="1995" name="Proc. Natl. Acad. Sci. U.S.A.">
        <title>p115 is a general vesicular transport factor related to the yeast endoplasmic reticulum to Golgi transport factor Uso1p.</title>
        <authorList>
            <person name="Sapperstein S.K."/>
            <person name="Walter D.M."/>
            <person name="Grosvenor A.R."/>
            <person name="Heuser J.E."/>
            <person name="Waters M.G."/>
        </authorList>
    </citation>
    <scope>NUCLEOTIDE SEQUENCE [MRNA]</scope>
    <scope>FUNCTION</scope>
    <scope>SUBUNIT</scope>
    <scope>SUBCELLULAR LOCATION</scope>
    <source>
        <tissue>Liver</tissue>
    </source>
</reference>
<reference key="2">
    <citation type="journal article" date="1995" name="Proc. Natl. Acad. Sci. U.S.A.">
        <title>Transcytosis-associated protein (TAP)/p115 is a general fusion factor required for binding of vesicles to acceptor membranes.</title>
        <authorList>
            <person name="Barroso M."/>
            <person name="Nelson D.S."/>
            <person name="Sztul E."/>
        </authorList>
    </citation>
    <scope>NUCLEOTIDE SEQUENCE [MRNA]</scope>
    <scope>PARTIAL PROTEIN SEQUENCE</scope>
    <scope>FUNCTION</scope>
    <source>
        <tissue>Liver</tissue>
    </source>
</reference>
<reference key="3">
    <citation type="journal article" date="1997" name="Cell">
        <title>The vesicle docking protein p115 binds GM130, a cis-Golgi matrix protein, in a mitotically regulated manner.</title>
        <authorList>
            <person name="Nakamura N."/>
            <person name="Lowe M."/>
            <person name="Levine T.P."/>
            <person name="Rabouille C."/>
            <person name="Warren G."/>
        </authorList>
    </citation>
    <scope>INTERACTION WITH GOLGA2</scope>
</reference>
<reference key="4">
    <citation type="journal article" date="1998" name="Cell">
        <title>Cdc2 kinase directly phosphorylates the cis-Golgi matrix protein GM130 and is required for Golgi fragmentation in mitosis.</title>
        <authorList>
            <person name="Lowe M."/>
            <person name="Rabouille C."/>
            <person name="Nakamura N."/>
            <person name="Watson R."/>
            <person name="Jackman M."/>
            <person name="Jamsa E."/>
            <person name="Rahman D."/>
            <person name="Pappin D.J.C."/>
            <person name="Warren G."/>
        </authorList>
    </citation>
    <scope>INTERACTION WITH GOLGA2</scope>
</reference>
<reference key="5">
    <citation type="journal article" date="2000" name="J. Biol. Chem.">
        <title>Binding relationships of membrane tethering components. The giantin N terminus and the GM130 N terminus compete for binding to the p115 C terminus.</title>
        <authorList>
            <person name="Linstedt A.D."/>
            <person name="Jesch S.A."/>
            <person name="Mehta A."/>
            <person name="Lee T.H."/>
            <person name="Garcia-Mata R."/>
            <person name="Nelson D.S."/>
            <person name="Sztul E."/>
        </authorList>
    </citation>
    <scope>INTERACTION WITH GOLGA2</scope>
</reference>
<reference key="6">
    <citation type="journal article" date="2000" name="J. Cell Biol.">
        <title>The mitotic phosphorylation cycle of the cis-Golgi matrix protein GM130.</title>
        <authorList>
            <person name="Lowe M."/>
            <person name="Gonatas N.K."/>
            <person name="Warren G."/>
        </authorList>
    </citation>
    <scope>INTERACTION WITH GOLGA2</scope>
</reference>
<reference key="7">
    <citation type="journal article" date="2000" name="Mol. Biol. Cell">
        <title>The role of the tethering proteins p115 and GM130 in transport through the Golgi apparatus in vivo.</title>
        <authorList>
            <person name="Seemann J."/>
            <person name="Jokitalo E.J."/>
            <person name="Warren G."/>
        </authorList>
    </citation>
    <scope>FUNCTION</scope>
</reference>
<reference key="8">
    <citation type="journal article" date="2006" name="Proc. Natl. Acad. Sci. U.S.A.">
        <title>Quantitative phosphoproteomics of vasopressin-sensitive renal cells: regulation of aquaporin-2 phosphorylation at two sites.</title>
        <authorList>
            <person name="Hoffert J.D."/>
            <person name="Pisitkun T."/>
            <person name="Wang G."/>
            <person name="Shen R.-F."/>
            <person name="Knepper M.A."/>
        </authorList>
    </citation>
    <scope>PHOSPHORYLATION [LARGE SCALE ANALYSIS] AT SER-940</scope>
    <scope>IDENTIFICATION BY MASS SPECTROMETRY [LARGE SCALE ANALYSIS]</scope>
</reference>
<reference key="9">
    <citation type="journal article" date="2012" name="Nat. Commun.">
        <title>Quantitative maps of protein phosphorylation sites across 14 different rat organs and tissues.</title>
        <authorList>
            <person name="Lundby A."/>
            <person name="Secher A."/>
            <person name="Lage K."/>
            <person name="Nordsborg N.B."/>
            <person name="Dmytriyev A."/>
            <person name="Lundby C."/>
            <person name="Olsen J.V."/>
        </authorList>
    </citation>
    <scope>PHOSPHORYLATION [LARGE SCALE ANALYSIS] AT SER-940</scope>
    <scope>IDENTIFICATION BY MASS SPECTROMETRY [LARGE SCALE ANALYSIS]</scope>
</reference>
<protein>
    <recommendedName>
        <fullName evidence="12">General vesicular transport factor p115</fullName>
    </recommendedName>
    <alternativeName>
        <fullName>Protein USO1 homolog</fullName>
    </alternativeName>
    <alternativeName>
        <fullName evidence="13">Transcytosis-associated protein</fullName>
        <shortName evidence="13">TAP</shortName>
    </alternativeName>
    <alternativeName>
        <fullName>Vesicle-docking protein</fullName>
    </alternativeName>
</protein>
<keyword id="KW-0007">Acetylation</keyword>
<keyword id="KW-0175">Coiled coil</keyword>
<keyword id="KW-0963">Cytoplasm</keyword>
<keyword id="KW-0903">Direct protein sequencing</keyword>
<keyword id="KW-0931">ER-Golgi transport</keyword>
<keyword id="KW-0333">Golgi apparatus</keyword>
<keyword id="KW-0472">Membrane</keyword>
<keyword id="KW-0597">Phosphoprotein</keyword>
<keyword id="KW-0653">Protein transport</keyword>
<keyword id="KW-1185">Reference proteome</keyword>
<keyword id="KW-0677">Repeat</keyword>
<keyword id="KW-0813">Transport</keyword>
<evidence type="ECO:0000250" key="1"/>
<evidence type="ECO:0000250" key="2">
    <source>
        <dbReference type="UniProtKB" id="O60763"/>
    </source>
</evidence>
<evidence type="ECO:0000255" key="3"/>
<evidence type="ECO:0000256" key="4">
    <source>
        <dbReference type="SAM" id="MobiDB-lite"/>
    </source>
</evidence>
<evidence type="ECO:0000269" key="5">
    <source>
    </source>
</evidence>
<evidence type="ECO:0000269" key="6">
    <source>
    </source>
</evidence>
<evidence type="ECO:0000269" key="7">
    <source>
    </source>
</evidence>
<evidence type="ECO:0000269" key="8">
    <source>
    </source>
</evidence>
<evidence type="ECO:0000269" key="9">
    <source>
    </source>
</evidence>
<evidence type="ECO:0000269" key="10">
    <source>
    </source>
</evidence>
<evidence type="ECO:0000269" key="11">
    <source>
    </source>
</evidence>
<evidence type="ECO:0000303" key="12">
    <source>
    </source>
</evidence>
<evidence type="ECO:0000303" key="13">
    <source>
    </source>
</evidence>
<evidence type="ECO:0000305" key="14"/>
<evidence type="ECO:0007744" key="15">
    <source>
    </source>
</evidence>
<evidence type="ECO:0007744" key="16">
    <source>
    </source>
</evidence>